<protein>
    <recommendedName>
        <fullName>Uncharacterized protein C12C2.01c</fullName>
    </recommendedName>
</protein>
<keyword id="KW-1185">Reference proteome</keyword>
<accession>Q09742</accession>
<accession>Q9USY6</accession>
<dbReference type="EMBL" id="CU329671">
    <property type="protein sequence ID" value="CAA20325.1"/>
    <property type="molecule type" value="Genomic_DNA"/>
</dbReference>
<dbReference type="PIR" id="T39721">
    <property type="entry name" value="T39721"/>
</dbReference>
<dbReference type="RefSeq" id="NP_001018815.2">
    <property type="nucleotide sequence ID" value="NM_001021930.3"/>
</dbReference>
<dbReference type="SMR" id="Q09742"/>
<dbReference type="PaxDb" id="4896-SPBC12C2.01c.1"/>
<dbReference type="EnsemblFungi" id="SPBC12C2.01c.1">
    <property type="protein sequence ID" value="SPBC12C2.01c.1:pep"/>
    <property type="gene ID" value="SPBC12C2.01c"/>
</dbReference>
<dbReference type="KEGG" id="spo:3361298"/>
<dbReference type="PomBase" id="SPBC12C2.01c"/>
<dbReference type="VEuPathDB" id="FungiDB:SPBC12C2.01c"/>
<dbReference type="HOGENOM" id="CLU_874819_0_0_1"/>
<dbReference type="InParanoid" id="Q09742"/>
<dbReference type="PRO" id="PR:Q09742"/>
<dbReference type="Proteomes" id="UP000002485">
    <property type="component" value="Chromosome II"/>
</dbReference>
<dbReference type="GO" id="GO:0005739">
    <property type="term" value="C:mitochondrion"/>
    <property type="evidence" value="ECO:0007005"/>
    <property type="project" value="PomBase"/>
</dbReference>
<proteinExistence type="predicted"/>
<sequence>MYNVTYRLLRLSLISSHSLRKSRSFDVKNFANIHFFIPLPNTPKKFYSVNAFSPLLKARRMTATIVSNHNVGCSCCYFRQYSTKQFRDLNTSEALSPCKAEPIPYKIMSSMSNFSDFKSRFSQYRESHLKLLNELQNVKDTNDLKDRIRLLHLNSSSKLNAFLHDLINAPNVSAEMKENCVRLIFFGRKYDPFLRSRMFTLTIRYFLLQKNRLRTSFYLLKHMELLALPASYELKTTLLEWFLRKRKFETAQKIFLSLCFSQHFPSEKLLMVLLLHGTETMQEYAMIQAINFVNTEQKLRFYDRLHSICSKLKFSSTG</sequence>
<feature type="chain" id="PRO_0000116503" description="Uncharacterized protein C12C2.01c">
    <location>
        <begin position="1"/>
        <end position="318"/>
    </location>
</feature>
<gene>
    <name type="ORF">SPBC12C2.01c</name>
    <name type="ORF">SPBC17F3.03c</name>
</gene>
<name>YB61_SCHPO</name>
<organism>
    <name type="scientific">Schizosaccharomyces pombe (strain 972 / ATCC 24843)</name>
    <name type="common">Fission yeast</name>
    <dbReference type="NCBI Taxonomy" id="284812"/>
    <lineage>
        <taxon>Eukaryota</taxon>
        <taxon>Fungi</taxon>
        <taxon>Dikarya</taxon>
        <taxon>Ascomycota</taxon>
        <taxon>Taphrinomycotina</taxon>
        <taxon>Schizosaccharomycetes</taxon>
        <taxon>Schizosaccharomycetales</taxon>
        <taxon>Schizosaccharomycetaceae</taxon>
        <taxon>Schizosaccharomyces</taxon>
    </lineage>
</organism>
<reference key="1">
    <citation type="journal article" date="2002" name="Nature">
        <title>The genome sequence of Schizosaccharomyces pombe.</title>
        <authorList>
            <person name="Wood V."/>
            <person name="Gwilliam R."/>
            <person name="Rajandream M.A."/>
            <person name="Lyne M.H."/>
            <person name="Lyne R."/>
            <person name="Stewart A."/>
            <person name="Sgouros J.G."/>
            <person name="Peat N."/>
            <person name="Hayles J."/>
            <person name="Baker S.G."/>
            <person name="Basham D."/>
            <person name="Bowman S."/>
            <person name="Brooks K."/>
            <person name="Brown D."/>
            <person name="Brown S."/>
            <person name="Chillingworth T."/>
            <person name="Churcher C.M."/>
            <person name="Collins M."/>
            <person name="Connor R."/>
            <person name="Cronin A."/>
            <person name="Davis P."/>
            <person name="Feltwell T."/>
            <person name="Fraser A."/>
            <person name="Gentles S."/>
            <person name="Goble A."/>
            <person name="Hamlin N."/>
            <person name="Harris D.E."/>
            <person name="Hidalgo J."/>
            <person name="Hodgson G."/>
            <person name="Holroyd S."/>
            <person name="Hornsby T."/>
            <person name="Howarth S."/>
            <person name="Huckle E.J."/>
            <person name="Hunt S."/>
            <person name="Jagels K."/>
            <person name="James K.D."/>
            <person name="Jones L."/>
            <person name="Jones M."/>
            <person name="Leather S."/>
            <person name="McDonald S."/>
            <person name="McLean J."/>
            <person name="Mooney P."/>
            <person name="Moule S."/>
            <person name="Mungall K.L."/>
            <person name="Murphy L.D."/>
            <person name="Niblett D."/>
            <person name="Odell C."/>
            <person name="Oliver K."/>
            <person name="O'Neil S."/>
            <person name="Pearson D."/>
            <person name="Quail M.A."/>
            <person name="Rabbinowitsch E."/>
            <person name="Rutherford K.M."/>
            <person name="Rutter S."/>
            <person name="Saunders D."/>
            <person name="Seeger K."/>
            <person name="Sharp S."/>
            <person name="Skelton J."/>
            <person name="Simmonds M.N."/>
            <person name="Squares R."/>
            <person name="Squares S."/>
            <person name="Stevens K."/>
            <person name="Taylor K."/>
            <person name="Taylor R.G."/>
            <person name="Tivey A."/>
            <person name="Walsh S.V."/>
            <person name="Warren T."/>
            <person name="Whitehead S."/>
            <person name="Woodward J.R."/>
            <person name="Volckaert G."/>
            <person name="Aert R."/>
            <person name="Robben J."/>
            <person name="Grymonprez B."/>
            <person name="Weltjens I."/>
            <person name="Vanstreels E."/>
            <person name="Rieger M."/>
            <person name="Schaefer M."/>
            <person name="Mueller-Auer S."/>
            <person name="Gabel C."/>
            <person name="Fuchs M."/>
            <person name="Duesterhoeft A."/>
            <person name="Fritzc C."/>
            <person name="Holzer E."/>
            <person name="Moestl D."/>
            <person name="Hilbert H."/>
            <person name="Borzym K."/>
            <person name="Langer I."/>
            <person name="Beck A."/>
            <person name="Lehrach H."/>
            <person name="Reinhardt R."/>
            <person name="Pohl T.M."/>
            <person name="Eger P."/>
            <person name="Zimmermann W."/>
            <person name="Wedler H."/>
            <person name="Wambutt R."/>
            <person name="Purnelle B."/>
            <person name="Goffeau A."/>
            <person name="Cadieu E."/>
            <person name="Dreano S."/>
            <person name="Gloux S."/>
            <person name="Lelaure V."/>
            <person name="Mottier S."/>
            <person name="Galibert F."/>
            <person name="Aves S.J."/>
            <person name="Xiang Z."/>
            <person name="Hunt C."/>
            <person name="Moore K."/>
            <person name="Hurst S.M."/>
            <person name="Lucas M."/>
            <person name="Rochet M."/>
            <person name="Gaillardin C."/>
            <person name="Tallada V.A."/>
            <person name="Garzon A."/>
            <person name="Thode G."/>
            <person name="Daga R.R."/>
            <person name="Cruzado L."/>
            <person name="Jimenez J."/>
            <person name="Sanchez M."/>
            <person name="del Rey F."/>
            <person name="Benito J."/>
            <person name="Dominguez A."/>
            <person name="Revuelta J.L."/>
            <person name="Moreno S."/>
            <person name="Armstrong J."/>
            <person name="Forsburg S.L."/>
            <person name="Cerutti L."/>
            <person name="Lowe T."/>
            <person name="McCombie W.R."/>
            <person name="Paulsen I."/>
            <person name="Potashkin J."/>
            <person name="Shpakovski G.V."/>
            <person name="Ussery D."/>
            <person name="Barrell B.G."/>
            <person name="Nurse P."/>
        </authorList>
    </citation>
    <scope>NUCLEOTIDE SEQUENCE [LARGE SCALE GENOMIC DNA]</scope>
    <source>
        <strain>972 / ATCC 24843</strain>
    </source>
</reference>